<accession>A0QS96</accession>
<accession>I7FG33</accession>
<accession>P41195</accession>
<reference key="1">
    <citation type="submission" date="2006-10" db="EMBL/GenBank/DDBJ databases">
        <authorList>
            <person name="Fleischmann R.D."/>
            <person name="Dodson R.J."/>
            <person name="Haft D.H."/>
            <person name="Merkel J.S."/>
            <person name="Nelson W.C."/>
            <person name="Fraser C.M."/>
        </authorList>
    </citation>
    <scope>NUCLEOTIDE SEQUENCE [LARGE SCALE GENOMIC DNA]</scope>
    <source>
        <strain>ATCC 700084 / mc(2)155</strain>
    </source>
</reference>
<reference key="2">
    <citation type="journal article" date="2007" name="Genome Biol.">
        <title>Interrupted coding sequences in Mycobacterium smegmatis: authentic mutations or sequencing errors?</title>
        <authorList>
            <person name="Deshayes C."/>
            <person name="Perrodou E."/>
            <person name="Gallien S."/>
            <person name="Euphrasie D."/>
            <person name="Schaeffer C."/>
            <person name="Van-Dorsselaer A."/>
            <person name="Poch O."/>
            <person name="Lecompte O."/>
            <person name="Reyrat J.-M."/>
        </authorList>
    </citation>
    <scope>NUCLEOTIDE SEQUENCE [LARGE SCALE GENOMIC DNA]</scope>
    <source>
        <strain>ATCC 700084 / mc(2)155</strain>
    </source>
</reference>
<reference key="3">
    <citation type="journal article" date="2009" name="Genome Res.">
        <title>Ortho-proteogenomics: multiple proteomes investigation through orthology and a new MS-based protocol.</title>
        <authorList>
            <person name="Gallien S."/>
            <person name="Perrodou E."/>
            <person name="Carapito C."/>
            <person name="Deshayes C."/>
            <person name="Reyrat J.-M."/>
            <person name="Van Dorsselaer A."/>
            <person name="Poch O."/>
            <person name="Schaeffer C."/>
            <person name="Lecompte O."/>
        </authorList>
    </citation>
    <scope>NUCLEOTIDE SEQUENCE [LARGE SCALE GENOMIC DNA]</scope>
    <source>
        <strain>ATCC 700084 / mc(2)155</strain>
    </source>
</reference>
<reference key="4">
    <citation type="journal article" date="1994" name="Antimicrob. Agents Chemother.">
        <title>Streptomycin resistance in mycobacteria.</title>
        <authorList>
            <person name="Honore N."/>
            <person name="Cole S.T."/>
        </authorList>
    </citation>
    <scope>NUCLEOTIDE SEQUENCE [GENOMIC DNA] OF 9-96</scope>
</reference>
<protein>
    <recommendedName>
        <fullName evidence="3">Small ribosomal subunit protein uS12</fullName>
    </recommendedName>
    <alternativeName>
        <fullName>30S ribosomal protein S12</fullName>
    </alternativeName>
</protein>
<keyword id="KW-0002">3D-structure</keyword>
<keyword id="KW-0488">Methylation</keyword>
<keyword id="KW-1185">Reference proteome</keyword>
<keyword id="KW-0687">Ribonucleoprotein</keyword>
<keyword id="KW-0689">Ribosomal protein</keyword>
<keyword id="KW-0694">RNA-binding</keyword>
<keyword id="KW-0699">rRNA-binding</keyword>
<keyword id="KW-0820">tRNA-binding</keyword>
<organism>
    <name type="scientific">Mycolicibacterium smegmatis (strain ATCC 700084 / mc(2)155)</name>
    <name type="common">Mycobacterium smegmatis</name>
    <dbReference type="NCBI Taxonomy" id="246196"/>
    <lineage>
        <taxon>Bacteria</taxon>
        <taxon>Bacillati</taxon>
        <taxon>Actinomycetota</taxon>
        <taxon>Actinomycetes</taxon>
        <taxon>Mycobacteriales</taxon>
        <taxon>Mycobacteriaceae</taxon>
        <taxon>Mycolicibacterium</taxon>
    </lineage>
</organism>
<gene>
    <name type="primary">rpsL</name>
    <name type="ordered locus">MSMEG_1398</name>
    <name type="ordered locus">MSMEI_1360</name>
</gene>
<sequence length="124" mass="13863">MPTIQQLVRKGRRDKIAKVKTAALKGSPQRRGVCTRVYTTTPKKPNSALRKVARVKLTSQVEVTAYIPGEGHNLQEHSMVLVRGGRVKDLPGVRYKIIRGSLDTQGVKNRKQARSRYGAKKEKS</sequence>
<proteinExistence type="evidence at protein level"/>
<evidence type="ECO:0000250" key="1"/>
<evidence type="ECO:0000256" key="2">
    <source>
        <dbReference type="SAM" id="MobiDB-lite"/>
    </source>
</evidence>
<evidence type="ECO:0000305" key="3"/>
<evidence type="ECO:0007829" key="4">
    <source>
        <dbReference type="PDB" id="5O5J"/>
    </source>
</evidence>
<evidence type="ECO:0007829" key="5">
    <source>
        <dbReference type="PDB" id="5XYU"/>
    </source>
</evidence>
<feature type="chain" id="PRO_0000293603" description="Small ribosomal subunit protein uS12">
    <location>
        <begin position="1"/>
        <end position="124"/>
    </location>
</feature>
<feature type="region of interest" description="Disordered" evidence="2">
    <location>
        <begin position="105"/>
        <end position="124"/>
    </location>
</feature>
<feature type="compositionally biased region" description="Basic residues" evidence="2">
    <location>
        <begin position="108"/>
        <end position="118"/>
    </location>
</feature>
<feature type="modified residue" description="3-methylthioaspartic acid" evidence="1">
    <location>
        <position position="89"/>
    </location>
</feature>
<feature type="helix" evidence="5">
    <location>
        <begin position="4"/>
        <end position="9"/>
    </location>
</feature>
<feature type="helix" evidence="4">
    <location>
        <begin position="22"/>
        <end position="24"/>
    </location>
</feature>
<feature type="strand" evidence="5">
    <location>
        <begin position="36"/>
        <end position="40"/>
    </location>
</feature>
<feature type="strand" evidence="5">
    <location>
        <begin position="43"/>
        <end position="45"/>
    </location>
</feature>
<feature type="strand" evidence="5">
    <location>
        <begin position="50"/>
        <end position="57"/>
    </location>
</feature>
<feature type="strand" evidence="5">
    <location>
        <begin position="62"/>
        <end position="66"/>
    </location>
</feature>
<feature type="strand" evidence="4">
    <location>
        <begin position="79"/>
        <end position="84"/>
    </location>
</feature>
<feature type="strand" evidence="5">
    <location>
        <begin position="88"/>
        <end position="92"/>
    </location>
</feature>
<feature type="strand" evidence="4">
    <location>
        <begin position="95"/>
        <end position="97"/>
    </location>
</feature>
<feature type="strand" evidence="5">
    <location>
        <begin position="99"/>
        <end position="101"/>
    </location>
</feature>
<feature type="turn" evidence="5">
    <location>
        <begin position="114"/>
        <end position="118"/>
    </location>
</feature>
<comment type="function">
    <text evidence="1">With S4 and S5 plays an important role in translational accuracy.</text>
</comment>
<comment type="function">
    <text evidence="1">Interacts with and stabilizes bases of the 16S rRNA that are involved in tRNA selection in the A site and with the mRNA backbone. Located at the interface of the 30S and 50S subunits, it traverses the body of the 30S subunit contacting proteins on the other side and probably holding the rRNA structure together. The combined cluster of proteins S8, S12 and S17 appears to hold together the shoulder and platform of the 30S subunit (By similarity).</text>
</comment>
<comment type="subunit">
    <text evidence="1">Part of the 30S ribosomal subunit. Contacts proteins S8 and S17. May interact with IF1 in the 30S initiation complex (By similarity).</text>
</comment>
<comment type="similarity">
    <text evidence="3">Belongs to the universal ribosomal protein uS12 family.</text>
</comment>
<name>RS12_MYCS2</name>
<dbReference type="EMBL" id="CP000480">
    <property type="protein sequence ID" value="ABK73485.1"/>
    <property type="molecule type" value="Genomic_DNA"/>
</dbReference>
<dbReference type="EMBL" id="CP001663">
    <property type="protein sequence ID" value="AFP37833.1"/>
    <property type="molecule type" value="Genomic_DNA"/>
</dbReference>
<dbReference type="EMBL" id="X80125">
    <property type="protein sequence ID" value="CAB56849.1"/>
    <property type="molecule type" value="Genomic_DNA"/>
</dbReference>
<dbReference type="RefSeq" id="WP_007167812.1">
    <property type="nucleotide sequence ID" value="NZ_SIJM01000030.1"/>
</dbReference>
<dbReference type="RefSeq" id="YP_885784.1">
    <property type="nucleotide sequence ID" value="NC_008596.1"/>
</dbReference>
<dbReference type="PDB" id="5O5J">
    <property type="method" value="EM"/>
    <property type="resolution" value="3.45 A"/>
    <property type="chains" value="L=1-124"/>
</dbReference>
<dbReference type="PDB" id="5O61">
    <property type="method" value="EM"/>
    <property type="resolution" value="3.31 A"/>
    <property type="chains" value="BL=1-124"/>
</dbReference>
<dbReference type="PDB" id="5XYU">
    <property type="method" value="EM"/>
    <property type="resolution" value="3.45 A"/>
    <property type="chains" value="L=1-124"/>
</dbReference>
<dbReference type="PDB" id="5ZEB">
    <property type="method" value="EM"/>
    <property type="resolution" value="3.40 A"/>
    <property type="chains" value="l=1-124"/>
</dbReference>
<dbReference type="PDB" id="5ZEP">
    <property type="method" value="EM"/>
    <property type="resolution" value="3.40 A"/>
    <property type="chains" value="l=1-124"/>
</dbReference>
<dbReference type="PDB" id="5ZEU">
    <property type="method" value="EM"/>
    <property type="resolution" value="3.70 A"/>
    <property type="chains" value="l=1-124"/>
</dbReference>
<dbReference type="PDB" id="6DZI">
    <property type="method" value="EM"/>
    <property type="resolution" value="3.46 A"/>
    <property type="chains" value="u=2-123"/>
</dbReference>
<dbReference type="PDB" id="6DZK">
    <property type="method" value="EM"/>
    <property type="resolution" value="3.60 A"/>
    <property type="chains" value="L=1-124"/>
</dbReference>
<dbReference type="PDB" id="8FR8">
    <property type="method" value="EM"/>
    <property type="resolution" value="2.76 A"/>
    <property type="chains" value="n=2-123"/>
</dbReference>
<dbReference type="PDB" id="8V9J">
    <property type="method" value="EM"/>
    <property type="resolution" value="3.10 A"/>
    <property type="chains" value="l=1-124"/>
</dbReference>
<dbReference type="PDB" id="8V9K">
    <property type="method" value="EM"/>
    <property type="resolution" value="3.10 A"/>
    <property type="chains" value="l=1-124"/>
</dbReference>
<dbReference type="PDB" id="8V9L">
    <property type="method" value="EM"/>
    <property type="resolution" value="3.00 A"/>
    <property type="chains" value="l=1-124"/>
</dbReference>
<dbReference type="PDB" id="8VIO">
    <property type="method" value="EM"/>
    <property type="resolution" value="3.26 A"/>
    <property type="chains" value="s=1-124"/>
</dbReference>
<dbReference type="PDB" id="8WHX">
    <property type="method" value="EM"/>
    <property type="resolution" value="2.80 A"/>
    <property type="chains" value="m=1-124"/>
</dbReference>
<dbReference type="PDB" id="8WI7">
    <property type="method" value="EM"/>
    <property type="resolution" value="3.50 A"/>
    <property type="chains" value="m=1-124"/>
</dbReference>
<dbReference type="PDB" id="8WI9">
    <property type="method" value="EM"/>
    <property type="resolution" value="3.50 A"/>
    <property type="chains" value="m=1-124"/>
</dbReference>
<dbReference type="PDB" id="8WIB">
    <property type="method" value="EM"/>
    <property type="resolution" value="3.50 A"/>
    <property type="chains" value="m=1-124"/>
</dbReference>
<dbReference type="PDB" id="8WID">
    <property type="method" value="EM"/>
    <property type="resolution" value="3.50 A"/>
    <property type="chains" value="m=1-124"/>
</dbReference>
<dbReference type="PDB" id="8WIF">
    <property type="method" value="EM"/>
    <property type="resolution" value="2.90 A"/>
    <property type="chains" value="m=1-124"/>
</dbReference>
<dbReference type="PDBsum" id="5O5J"/>
<dbReference type="PDBsum" id="5O61"/>
<dbReference type="PDBsum" id="5XYU"/>
<dbReference type="PDBsum" id="5ZEB"/>
<dbReference type="PDBsum" id="5ZEP"/>
<dbReference type="PDBsum" id="5ZEU"/>
<dbReference type="PDBsum" id="6DZI"/>
<dbReference type="PDBsum" id="6DZK"/>
<dbReference type="PDBsum" id="8FR8"/>
<dbReference type="PDBsum" id="8V9J"/>
<dbReference type="PDBsum" id="8V9K"/>
<dbReference type="PDBsum" id="8V9L"/>
<dbReference type="PDBsum" id="8VIO"/>
<dbReference type="PDBsum" id="8WHX"/>
<dbReference type="PDBsum" id="8WI7"/>
<dbReference type="PDBsum" id="8WI9"/>
<dbReference type="PDBsum" id="8WIB"/>
<dbReference type="PDBsum" id="8WID"/>
<dbReference type="PDBsum" id="8WIF"/>
<dbReference type="EMDB" id="EMD-29397"/>
<dbReference type="EMDB" id="EMD-3748"/>
<dbReference type="EMDB" id="EMD-3751"/>
<dbReference type="EMDB" id="EMD-37551"/>
<dbReference type="EMDB" id="EMD-37559"/>
<dbReference type="EMDB" id="EMD-37561"/>
<dbReference type="EMDB" id="EMD-37562"/>
<dbReference type="EMDB" id="EMD-37564"/>
<dbReference type="EMDB" id="EMD-37565"/>
<dbReference type="EMDB" id="EMD-43074"/>
<dbReference type="EMDB" id="EMD-43075"/>
<dbReference type="EMDB" id="EMD-43076"/>
<dbReference type="EMDB" id="EMD-43267"/>
<dbReference type="EMDB" id="EMD-6790"/>
<dbReference type="EMDB" id="EMD-6920"/>
<dbReference type="EMDB" id="EMD-6921"/>
<dbReference type="EMDB" id="EMD-6923"/>
<dbReference type="EMDB" id="EMD-8932"/>
<dbReference type="EMDB" id="EMD-8934"/>
<dbReference type="SMR" id="A0QS96"/>
<dbReference type="IntAct" id="A0QS96">
    <property type="interactions" value="1"/>
</dbReference>
<dbReference type="STRING" id="246196.MSMEG_1398"/>
<dbReference type="PaxDb" id="246196-MSMEI_1360"/>
<dbReference type="GeneID" id="97441318"/>
<dbReference type="KEGG" id="msb:LJ00_06970"/>
<dbReference type="KEGG" id="msg:MSMEI_1360"/>
<dbReference type="KEGG" id="msm:MSMEG_1398"/>
<dbReference type="PATRIC" id="fig|246196.19.peg.1381"/>
<dbReference type="eggNOG" id="COG0048">
    <property type="taxonomic scope" value="Bacteria"/>
</dbReference>
<dbReference type="OrthoDB" id="9802366at2"/>
<dbReference type="Proteomes" id="UP000000757">
    <property type="component" value="Chromosome"/>
</dbReference>
<dbReference type="Proteomes" id="UP000006158">
    <property type="component" value="Chromosome"/>
</dbReference>
<dbReference type="GO" id="GO:0015935">
    <property type="term" value="C:small ribosomal subunit"/>
    <property type="evidence" value="ECO:0007669"/>
    <property type="project" value="InterPro"/>
</dbReference>
<dbReference type="GO" id="GO:0019843">
    <property type="term" value="F:rRNA binding"/>
    <property type="evidence" value="ECO:0007669"/>
    <property type="project" value="UniProtKB-UniRule"/>
</dbReference>
<dbReference type="GO" id="GO:0003735">
    <property type="term" value="F:structural constituent of ribosome"/>
    <property type="evidence" value="ECO:0007669"/>
    <property type="project" value="InterPro"/>
</dbReference>
<dbReference type="GO" id="GO:0000049">
    <property type="term" value="F:tRNA binding"/>
    <property type="evidence" value="ECO:0007669"/>
    <property type="project" value="UniProtKB-UniRule"/>
</dbReference>
<dbReference type="GO" id="GO:0006412">
    <property type="term" value="P:translation"/>
    <property type="evidence" value="ECO:0007669"/>
    <property type="project" value="UniProtKB-UniRule"/>
</dbReference>
<dbReference type="CDD" id="cd03368">
    <property type="entry name" value="Ribosomal_S12"/>
    <property type="match status" value="1"/>
</dbReference>
<dbReference type="FunFam" id="2.40.50.140:FF:000001">
    <property type="entry name" value="30S ribosomal protein S12"/>
    <property type="match status" value="1"/>
</dbReference>
<dbReference type="Gene3D" id="2.40.50.140">
    <property type="entry name" value="Nucleic acid-binding proteins"/>
    <property type="match status" value="1"/>
</dbReference>
<dbReference type="HAMAP" id="MF_00403_B">
    <property type="entry name" value="Ribosomal_uS12_B"/>
    <property type="match status" value="1"/>
</dbReference>
<dbReference type="InterPro" id="IPR012340">
    <property type="entry name" value="NA-bd_OB-fold"/>
</dbReference>
<dbReference type="InterPro" id="IPR006032">
    <property type="entry name" value="Ribosomal_uS12"/>
</dbReference>
<dbReference type="InterPro" id="IPR005679">
    <property type="entry name" value="Ribosomal_uS12_bac"/>
</dbReference>
<dbReference type="NCBIfam" id="TIGR00981">
    <property type="entry name" value="rpsL_bact"/>
    <property type="match status" value="1"/>
</dbReference>
<dbReference type="PANTHER" id="PTHR11652">
    <property type="entry name" value="30S RIBOSOMAL PROTEIN S12 FAMILY MEMBER"/>
    <property type="match status" value="1"/>
</dbReference>
<dbReference type="Pfam" id="PF00164">
    <property type="entry name" value="Ribosom_S12_S23"/>
    <property type="match status" value="1"/>
</dbReference>
<dbReference type="PIRSF" id="PIRSF002133">
    <property type="entry name" value="Ribosomal_S12/S23"/>
    <property type="match status" value="1"/>
</dbReference>
<dbReference type="PRINTS" id="PR01034">
    <property type="entry name" value="RIBOSOMALS12"/>
</dbReference>
<dbReference type="SUPFAM" id="SSF50249">
    <property type="entry name" value="Nucleic acid-binding proteins"/>
    <property type="match status" value="1"/>
</dbReference>
<dbReference type="PROSITE" id="PS00055">
    <property type="entry name" value="RIBOSOMAL_S12"/>
    <property type="match status" value="1"/>
</dbReference>